<reference key="1">
    <citation type="journal article" date="2008" name="DNA Res.">
        <title>Comparative genome analysis of Lactobacillus reuteri and Lactobacillus fermentum reveal a genomic island for reuterin and cobalamin production.</title>
        <authorList>
            <person name="Morita H."/>
            <person name="Toh H."/>
            <person name="Fukuda S."/>
            <person name="Horikawa H."/>
            <person name="Oshima K."/>
            <person name="Suzuki T."/>
            <person name="Murakami M."/>
            <person name="Hisamatsu S."/>
            <person name="Kato Y."/>
            <person name="Takizawa T."/>
            <person name="Fukuoka H."/>
            <person name="Yoshimura T."/>
            <person name="Itoh K."/>
            <person name="O'Sullivan D.J."/>
            <person name="McKay L.L."/>
            <person name="Ohno H."/>
            <person name="Kikuchi J."/>
            <person name="Masaoka T."/>
            <person name="Hattori M."/>
        </authorList>
    </citation>
    <scope>NUCLEOTIDE SEQUENCE [LARGE SCALE GENOMIC DNA]</scope>
    <source>
        <strain>JCM 1112</strain>
    </source>
</reference>
<dbReference type="EMBL" id="AP007281">
    <property type="protein sequence ID" value="BAG25913.1"/>
    <property type="molecule type" value="Genomic_DNA"/>
</dbReference>
<dbReference type="RefSeq" id="WP_003668788.1">
    <property type="nucleotide sequence ID" value="NC_010609.1"/>
</dbReference>
<dbReference type="SMR" id="B2G8Y1"/>
<dbReference type="GeneID" id="77191482"/>
<dbReference type="KEGG" id="lrf:LAR_1397"/>
<dbReference type="HOGENOM" id="CLU_072226_1_1_9"/>
<dbReference type="GO" id="GO:0015935">
    <property type="term" value="C:small ribosomal subunit"/>
    <property type="evidence" value="ECO:0007669"/>
    <property type="project" value="InterPro"/>
</dbReference>
<dbReference type="GO" id="GO:0019843">
    <property type="term" value="F:rRNA binding"/>
    <property type="evidence" value="ECO:0007669"/>
    <property type="project" value="UniProtKB-UniRule"/>
</dbReference>
<dbReference type="GO" id="GO:0003735">
    <property type="term" value="F:structural constituent of ribosome"/>
    <property type="evidence" value="ECO:0007669"/>
    <property type="project" value="InterPro"/>
</dbReference>
<dbReference type="GO" id="GO:0000049">
    <property type="term" value="F:tRNA binding"/>
    <property type="evidence" value="ECO:0007669"/>
    <property type="project" value="UniProtKB-UniRule"/>
</dbReference>
<dbReference type="GO" id="GO:0006412">
    <property type="term" value="P:translation"/>
    <property type="evidence" value="ECO:0007669"/>
    <property type="project" value="UniProtKB-UniRule"/>
</dbReference>
<dbReference type="CDD" id="cd14869">
    <property type="entry name" value="uS7_Bacteria"/>
    <property type="match status" value="1"/>
</dbReference>
<dbReference type="FunFam" id="1.10.455.10:FF:000001">
    <property type="entry name" value="30S ribosomal protein S7"/>
    <property type="match status" value="1"/>
</dbReference>
<dbReference type="Gene3D" id="1.10.455.10">
    <property type="entry name" value="Ribosomal protein S7 domain"/>
    <property type="match status" value="1"/>
</dbReference>
<dbReference type="HAMAP" id="MF_00480_B">
    <property type="entry name" value="Ribosomal_uS7_B"/>
    <property type="match status" value="1"/>
</dbReference>
<dbReference type="InterPro" id="IPR000235">
    <property type="entry name" value="Ribosomal_uS7"/>
</dbReference>
<dbReference type="InterPro" id="IPR005717">
    <property type="entry name" value="Ribosomal_uS7_bac/org-type"/>
</dbReference>
<dbReference type="InterPro" id="IPR020606">
    <property type="entry name" value="Ribosomal_uS7_CS"/>
</dbReference>
<dbReference type="InterPro" id="IPR023798">
    <property type="entry name" value="Ribosomal_uS7_dom"/>
</dbReference>
<dbReference type="InterPro" id="IPR036823">
    <property type="entry name" value="Ribosomal_uS7_dom_sf"/>
</dbReference>
<dbReference type="NCBIfam" id="TIGR01029">
    <property type="entry name" value="rpsG_bact"/>
    <property type="match status" value="1"/>
</dbReference>
<dbReference type="PANTHER" id="PTHR11205">
    <property type="entry name" value="RIBOSOMAL PROTEIN S7"/>
    <property type="match status" value="1"/>
</dbReference>
<dbReference type="Pfam" id="PF00177">
    <property type="entry name" value="Ribosomal_S7"/>
    <property type="match status" value="1"/>
</dbReference>
<dbReference type="PIRSF" id="PIRSF002122">
    <property type="entry name" value="RPS7p_RPS7a_RPS5e_RPS7o"/>
    <property type="match status" value="1"/>
</dbReference>
<dbReference type="SUPFAM" id="SSF47973">
    <property type="entry name" value="Ribosomal protein S7"/>
    <property type="match status" value="1"/>
</dbReference>
<dbReference type="PROSITE" id="PS00052">
    <property type="entry name" value="RIBOSOMAL_S7"/>
    <property type="match status" value="1"/>
</dbReference>
<sequence>MPRKGHVQKREILPDPMYNSKLVTSLIDHLMIDGKRGTATKILYAAFDEIKNETGNDPVEVFQQAMENVMPVLEVKARRVGGSNYQVPIEVRPDRRTTLGLRWIVQYARLRGEHTMVERLAREIIDASNNTGASVKKREDTHRMAEANRAFAHYRW</sequence>
<protein>
    <recommendedName>
        <fullName evidence="1">Small ribosomal subunit protein uS7</fullName>
    </recommendedName>
    <alternativeName>
        <fullName evidence="2">30S ribosomal protein S7</fullName>
    </alternativeName>
</protein>
<feature type="chain" id="PRO_1000125961" description="Small ribosomal subunit protein uS7">
    <location>
        <begin position="1"/>
        <end position="156"/>
    </location>
</feature>
<organism>
    <name type="scientific">Limosilactobacillus reuteri subsp. reuteri (strain JCM 1112)</name>
    <name type="common">Lactobacillus reuteri</name>
    <dbReference type="NCBI Taxonomy" id="557433"/>
    <lineage>
        <taxon>Bacteria</taxon>
        <taxon>Bacillati</taxon>
        <taxon>Bacillota</taxon>
        <taxon>Bacilli</taxon>
        <taxon>Lactobacillales</taxon>
        <taxon>Lactobacillaceae</taxon>
        <taxon>Limosilactobacillus</taxon>
    </lineage>
</organism>
<proteinExistence type="inferred from homology"/>
<gene>
    <name evidence="1" type="primary">rpsG</name>
    <name type="ordered locus">LAR_1397</name>
</gene>
<accession>B2G8Y1</accession>
<comment type="function">
    <text evidence="1">One of the primary rRNA binding proteins, it binds directly to 16S rRNA where it nucleates assembly of the head domain of the 30S subunit. Is located at the subunit interface close to the decoding center, probably blocks exit of the E-site tRNA.</text>
</comment>
<comment type="subunit">
    <text evidence="1">Part of the 30S ribosomal subunit. Contacts proteins S9 and S11.</text>
</comment>
<comment type="similarity">
    <text evidence="1">Belongs to the universal ribosomal protein uS7 family.</text>
</comment>
<name>RS7_LIMRJ</name>
<keyword id="KW-0687">Ribonucleoprotein</keyword>
<keyword id="KW-0689">Ribosomal protein</keyword>
<keyword id="KW-0694">RNA-binding</keyword>
<keyword id="KW-0699">rRNA-binding</keyword>
<keyword id="KW-0820">tRNA-binding</keyword>
<evidence type="ECO:0000255" key="1">
    <source>
        <dbReference type="HAMAP-Rule" id="MF_00480"/>
    </source>
</evidence>
<evidence type="ECO:0000305" key="2"/>